<evidence type="ECO:0000305" key="1"/>
<accession>Q9CVW4</accession>
<reference key="1">
    <citation type="journal article" date="2005" name="Science">
        <title>The transcriptional landscape of the mammalian genome.</title>
        <authorList>
            <person name="Carninci P."/>
            <person name="Kasukawa T."/>
            <person name="Katayama S."/>
            <person name="Gough J."/>
            <person name="Frith M.C."/>
            <person name="Maeda N."/>
            <person name="Oyama R."/>
            <person name="Ravasi T."/>
            <person name="Lenhard B."/>
            <person name="Wells C."/>
            <person name="Kodzius R."/>
            <person name="Shimokawa K."/>
            <person name="Bajic V.B."/>
            <person name="Brenner S.E."/>
            <person name="Batalov S."/>
            <person name="Forrest A.R."/>
            <person name="Zavolan M."/>
            <person name="Davis M.J."/>
            <person name="Wilming L.G."/>
            <person name="Aidinis V."/>
            <person name="Allen J.E."/>
            <person name="Ambesi-Impiombato A."/>
            <person name="Apweiler R."/>
            <person name="Aturaliya R.N."/>
            <person name="Bailey T.L."/>
            <person name="Bansal M."/>
            <person name="Baxter L."/>
            <person name="Beisel K.W."/>
            <person name="Bersano T."/>
            <person name="Bono H."/>
            <person name="Chalk A.M."/>
            <person name="Chiu K.P."/>
            <person name="Choudhary V."/>
            <person name="Christoffels A."/>
            <person name="Clutterbuck D.R."/>
            <person name="Crowe M.L."/>
            <person name="Dalla E."/>
            <person name="Dalrymple B.P."/>
            <person name="de Bono B."/>
            <person name="Della Gatta G."/>
            <person name="di Bernardo D."/>
            <person name="Down T."/>
            <person name="Engstrom P."/>
            <person name="Fagiolini M."/>
            <person name="Faulkner G."/>
            <person name="Fletcher C.F."/>
            <person name="Fukushima T."/>
            <person name="Furuno M."/>
            <person name="Futaki S."/>
            <person name="Gariboldi M."/>
            <person name="Georgii-Hemming P."/>
            <person name="Gingeras T.R."/>
            <person name="Gojobori T."/>
            <person name="Green R.E."/>
            <person name="Gustincich S."/>
            <person name="Harbers M."/>
            <person name="Hayashi Y."/>
            <person name="Hensch T.K."/>
            <person name="Hirokawa N."/>
            <person name="Hill D."/>
            <person name="Huminiecki L."/>
            <person name="Iacono M."/>
            <person name="Ikeo K."/>
            <person name="Iwama A."/>
            <person name="Ishikawa T."/>
            <person name="Jakt M."/>
            <person name="Kanapin A."/>
            <person name="Katoh M."/>
            <person name="Kawasawa Y."/>
            <person name="Kelso J."/>
            <person name="Kitamura H."/>
            <person name="Kitano H."/>
            <person name="Kollias G."/>
            <person name="Krishnan S.P."/>
            <person name="Kruger A."/>
            <person name="Kummerfeld S.K."/>
            <person name="Kurochkin I.V."/>
            <person name="Lareau L.F."/>
            <person name="Lazarevic D."/>
            <person name="Lipovich L."/>
            <person name="Liu J."/>
            <person name="Liuni S."/>
            <person name="McWilliam S."/>
            <person name="Madan Babu M."/>
            <person name="Madera M."/>
            <person name="Marchionni L."/>
            <person name="Matsuda H."/>
            <person name="Matsuzawa S."/>
            <person name="Miki H."/>
            <person name="Mignone F."/>
            <person name="Miyake S."/>
            <person name="Morris K."/>
            <person name="Mottagui-Tabar S."/>
            <person name="Mulder N."/>
            <person name="Nakano N."/>
            <person name="Nakauchi H."/>
            <person name="Ng P."/>
            <person name="Nilsson R."/>
            <person name="Nishiguchi S."/>
            <person name="Nishikawa S."/>
            <person name="Nori F."/>
            <person name="Ohara O."/>
            <person name="Okazaki Y."/>
            <person name="Orlando V."/>
            <person name="Pang K.C."/>
            <person name="Pavan W.J."/>
            <person name="Pavesi G."/>
            <person name="Pesole G."/>
            <person name="Petrovsky N."/>
            <person name="Piazza S."/>
            <person name="Reed J."/>
            <person name="Reid J.F."/>
            <person name="Ring B.Z."/>
            <person name="Ringwald M."/>
            <person name="Rost B."/>
            <person name="Ruan Y."/>
            <person name="Salzberg S.L."/>
            <person name="Sandelin A."/>
            <person name="Schneider C."/>
            <person name="Schoenbach C."/>
            <person name="Sekiguchi K."/>
            <person name="Semple C.A."/>
            <person name="Seno S."/>
            <person name="Sessa L."/>
            <person name="Sheng Y."/>
            <person name="Shibata Y."/>
            <person name="Shimada H."/>
            <person name="Shimada K."/>
            <person name="Silva D."/>
            <person name="Sinclair B."/>
            <person name="Sperling S."/>
            <person name="Stupka E."/>
            <person name="Sugiura K."/>
            <person name="Sultana R."/>
            <person name="Takenaka Y."/>
            <person name="Taki K."/>
            <person name="Tammoja K."/>
            <person name="Tan S.L."/>
            <person name="Tang S."/>
            <person name="Taylor M.S."/>
            <person name="Tegner J."/>
            <person name="Teichmann S.A."/>
            <person name="Ueda H.R."/>
            <person name="van Nimwegen E."/>
            <person name="Verardo R."/>
            <person name="Wei C.L."/>
            <person name="Yagi K."/>
            <person name="Yamanishi H."/>
            <person name="Zabarovsky E."/>
            <person name="Zhu S."/>
            <person name="Zimmer A."/>
            <person name="Hide W."/>
            <person name="Bult C."/>
            <person name="Grimmond S.M."/>
            <person name="Teasdale R.D."/>
            <person name="Liu E.T."/>
            <person name="Brusic V."/>
            <person name="Quackenbush J."/>
            <person name="Wahlestedt C."/>
            <person name="Mattick J.S."/>
            <person name="Hume D.A."/>
            <person name="Kai C."/>
            <person name="Sasaki D."/>
            <person name="Tomaru Y."/>
            <person name="Fukuda S."/>
            <person name="Kanamori-Katayama M."/>
            <person name="Suzuki M."/>
            <person name="Aoki J."/>
            <person name="Arakawa T."/>
            <person name="Iida J."/>
            <person name="Imamura K."/>
            <person name="Itoh M."/>
            <person name="Kato T."/>
            <person name="Kawaji H."/>
            <person name="Kawagashira N."/>
            <person name="Kawashima T."/>
            <person name="Kojima M."/>
            <person name="Kondo S."/>
            <person name="Konno H."/>
            <person name="Nakano K."/>
            <person name="Ninomiya N."/>
            <person name="Nishio T."/>
            <person name="Okada M."/>
            <person name="Plessy C."/>
            <person name="Shibata K."/>
            <person name="Shiraki T."/>
            <person name="Suzuki S."/>
            <person name="Tagami M."/>
            <person name="Waki K."/>
            <person name="Watahiki A."/>
            <person name="Okamura-Oho Y."/>
            <person name="Suzuki H."/>
            <person name="Kawai J."/>
            <person name="Hayashizaki Y."/>
        </authorList>
    </citation>
    <scope>NUCLEOTIDE SEQUENCE [LARGE SCALE MRNA]</scope>
    <source>
        <strain>C57BL/6J</strain>
        <tissue>Testis</tissue>
    </source>
</reference>
<dbReference type="EMBL" id="AK006255">
    <property type="protein sequence ID" value="BAB24485.1"/>
    <property type="status" value="ALT_FRAME"/>
    <property type="molecule type" value="mRNA"/>
</dbReference>
<dbReference type="CCDS" id="CCDS48483.1"/>
<dbReference type="RefSeq" id="NP_001366357.1">
    <property type="nucleotide sequence ID" value="NM_001379428.1"/>
</dbReference>
<dbReference type="RefSeq" id="NP_083612.1">
    <property type="nucleotide sequence ID" value="NM_029336.2"/>
</dbReference>
<dbReference type="RefSeq" id="XP_017168101.1">
    <property type="nucleotide sequence ID" value="XM_017312612.1"/>
</dbReference>
<dbReference type="SMR" id="Q9CVW4"/>
<dbReference type="STRING" id="10090.ENSMUSP00000141721"/>
<dbReference type="PaxDb" id="10090-ENSMUSP00000077049"/>
<dbReference type="ProteomicsDB" id="257390"/>
<dbReference type="Antibodypedia" id="63752">
    <property type="antibodies" value="7 antibodies from 6 providers"/>
</dbReference>
<dbReference type="Ensembl" id="ENSMUST00000077889.8">
    <property type="protein sequence ID" value="ENSMUSP00000077049.7"/>
    <property type="gene ID" value="ENSMUSG00000057072.12"/>
</dbReference>
<dbReference type="Ensembl" id="ENSMUST00000192151.6">
    <property type="protein sequence ID" value="ENSMUSP00000141721.2"/>
    <property type="gene ID" value="ENSMUSG00000057072.12"/>
</dbReference>
<dbReference type="GeneID" id="75558"/>
<dbReference type="KEGG" id="mmu:75558"/>
<dbReference type="UCSC" id="uc007ebw.2">
    <property type="organism name" value="mouse"/>
</dbReference>
<dbReference type="AGR" id="MGI:1922808"/>
<dbReference type="CTD" id="149643"/>
<dbReference type="MGI" id="MGI:1922808">
    <property type="gene designation" value="Spata45"/>
</dbReference>
<dbReference type="VEuPathDB" id="HostDB:ENSMUSG00000057072"/>
<dbReference type="eggNOG" id="ENOG502T16S">
    <property type="taxonomic scope" value="Eukaryota"/>
</dbReference>
<dbReference type="GeneTree" id="ENSGT00390000018676"/>
<dbReference type="HOGENOM" id="CLU_182643_0_0_1"/>
<dbReference type="InParanoid" id="Q9CVW4"/>
<dbReference type="OMA" id="HFSGAYQ"/>
<dbReference type="OrthoDB" id="9441981at2759"/>
<dbReference type="PhylomeDB" id="Q9CVW4"/>
<dbReference type="TreeFam" id="TF338207"/>
<dbReference type="BioGRID-ORCS" id="75558">
    <property type="hits" value="2 hits in 76 CRISPR screens"/>
</dbReference>
<dbReference type="PRO" id="PR:Q9CVW4"/>
<dbReference type="Proteomes" id="UP000000589">
    <property type="component" value="Chromosome 1"/>
</dbReference>
<dbReference type="RNAct" id="Q9CVW4">
    <property type="molecule type" value="protein"/>
</dbReference>
<dbReference type="Bgee" id="ENSMUSG00000057072">
    <property type="expression patterns" value="Expressed in testis and 47 other cell types or tissues"/>
</dbReference>
<dbReference type="InterPro" id="IPR038806">
    <property type="entry name" value="SPATA45"/>
</dbReference>
<dbReference type="PANTHER" id="PTHR35822">
    <property type="entry name" value="SPERMATOGENESIS-ASSOCIATED PROTEIN 45"/>
    <property type="match status" value="1"/>
</dbReference>
<dbReference type="PANTHER" id="PTHR35822:SF1">
    <property type="entry name" value="SPERMATOGENESIS-ASSOCIATED PROTEIN 45"/>
    <property type="match status" value="1"/>
</dbReference>
<name>SPT45_MOUSE</name>
<proteinExistence type="inferred from homology"/>
<protein>
    <recommendedName>
        <fullName>Spermatogenesis-associated protein 45</fullName>
    </recommendedName>
</protein>
<sequence>MTSMNKGNEEKTQGANRKQLLEELNEKRESYCLVERSNEVNLLRVQKRHFSKAYQTLACMHIKESVPESTRTSWVKHDLSVHKEKRHFLPKNNAIFG</sequence>
<organism>
    <name type="scientific">Mus musculus</name>
    <name type="common">Mouse</name>
    <dbReference type="NCBI Taxonomy" id="10090"/>
    <lineage>
        <taxon>Eukaryota</taxon>
        <taxon>Metazoa</taxon>
        <taxon>Chordata</taxon>
        <taxon>Craniata</taxon>
        <taxon>Vertebrata</taxon>
        <taxon>Euteleostomi</taxon>
        <taxon>Mammalia</taxon>
        <taxon>Eutheria</taxon>
        <taxon>Euarchontoglires</taxon>
        <taxon>Glires</taxon>
        <taxon>Rodentia</taxon>
        <taxon>Myomorpha</taxon>
        <taxon>Muroidea</taxon>
        <taxon>Muridae</taxon>
        <taxon>Murinae</taxon>
        <taxon>Mus</taxon>
        <taxon>Mus</taxon>
    </lineage>
</organism>
<gene>
    <name type="primary">Spata45</name>
</gene>
<comment type="similarity">
    <text evidence="1">Belongs to the SPATA45 family.</text>
</comment>
<comment type="sequence caution" evidence="1">
    <conflict type="frameshift">
        <sequence resource="EMBL-CDS" id="BAB24485"/>
    </conflict>
</comment>
<keyword id="KW-1185">Reference proteome</keyword>
<feature type="chain" id="PRO_0000285786" description="Spermatogenesis-associated protein 45">
    <location>
        <begin position="1"/>
        <end position="97"/>
    </location>
</feature>